<feature type="chain" id="PRO_0000057351" description="tRNA pseudouridine synthase A">
    <location>
        <begin position="1"/>
        <end position="270"/>
    </location>
</feature>
<feature type="active site" description="Nucleophile" evidence="1">
    <location>
        <position position="51"/>
    </location>
</feature>
<feature type="binding site" evidence="1">
    <location>
        <position position="109"/>
    </location>
    <ligand>
        <name>substrate</name>
    </ligand>
</feature>
<comment type="function">
    <text evidence="1">Formation of pseudouridine at positions 38, 39 and 40 in the anticodon stem and loop of transfer RNAs.</text>
</comment>
<comment type="catalytic activity">
    <reaction evidence="1">
        <text>uridine(38/39/40) in tRNA = pseudouridine(38/39/40) in tRNA</text>
        <dbReference type="Rhea" id="RHEA:22376"/>
        <dbReference type="Rhea" id="RHEA-COMP:10085"/>
        <dbReference type="Rhea" id="RHEA-COMP:10087"/>
        <dbReference type="ChEBI" id="CHEBI:65314"/>
        <dbReference type="ChEBI" id="CHEBI:65315"/>
        <dbReference type="EC" id="5.4.99.12"/>
    </reaction>
</comment>
<comment type="subunit">
    <text evidence="1">Homodimer.</text>
</comment>
<comment type="similarity">
    <text evidence="1">Belongs to the tRNA pseudouridine synthase TruA family.</text>
</comment>
<proteinExistence type="inferred from homology"/>
<name>TRUA_BURMA</name>
<organism>
    <name type="scientific">Burkholderia mallei (strain ATCC 23344)</name>
    <dbReference type="NCBI Taxonomy" id="243160"/>
    <lineage>
        <taxon>Bacteria</taxon>
        <taxon>Pseudomonadati</taxon>
        <taxon>Pseudomonadota</taxon>
        <taxon>Betaproteobacteria</taxon>
        <taxon>Burkholderiales</taxon>
        <taxon>Burkholderiaceae</taxon>
        <taxon>Burkholderia</taxon>
        <taxon>pseudomallei group</taxon>
    </lineage>
</organism>
<sequence length="270" mass="30014">MRIALGIQYDGAAFCGWQSQPHGKTVQDALERSLAEFAQTSLHTTVAGRTDTGVHGLGQVVHFDTDLDRADFSWVRGTNAFLPPTVAVQWAKPMPDTFHARFAAFERTYYYALYVHPVRSPMLAGRAGWVHTPLDVDAMREAAAHLVGEHDFSAFRSSECQAKSPVKHLYQIGIRPDGDFIHFRFRANAFLHHMVRNLMGCLVAVGRGRYPSSWLAEVLESRDRDCAAPTFMPEGLYLAHVGYPAEFAVPPAQLGSVPWSSVWADLDGRT</sequence>
<keyword id="KW-0413">Isomerase</keyword>
<keyword id="KW-1185">Reference proteome</keyword>
<keyword id="KW-0819">tRNA processing</keyword>
<dbReference type="EC" id="5.4.99.12" evidence="1"/>
<dbReference type="EMBL" id="CP000011">
    <property type="protein sequence ID" value="AAU45714.1"/>
    <property type="molecule type" value="Genomic_DNA"/>
</dbReference>
<dbReference type="RefSeq" id="WP_004203245.1">
    <property type="nucleotide sequence ID" value="NC_006349.2"/>
</dbReference>
<dbReference type="RefSeq" id="YP_106286.1">
    <property type="nucleotide sequence ID" value="NC_006349.2"/>
</dbReference>
<dbReference type="SMR" id="Q62AJ2"/>
<dbReference type="GeneID" id="93063899"/>
<dbReference type="KEGG" id="bma:BMAA1723"/>
<dbReference type="PATRIC" id="fig|243160.12.peg.5320"/>
<dbReference type="eggNOG" id="COG0101">
    <property type="taxonomic scope" value="Bacteria"/>
</dbReference>
<dbReference type="HOGENOM" id="CLU_014673_0_2_4"/>
<dbReference type="Proteomes" id="UP000006693">
    <property type="component" value="Chromosome 2"/>
</dbReference>
<dbReference type="GO" id="GO:0003723">
    <property type="term" value="F:RNA binding"/>
    <property type="evidence" value="ECO:0007669"/>
    <property type="project" value="InterPro"/>
</dbReference>
<dbReference type="GO" id="GO:0160147">
    <property type="term" value="F:tRNA pseudouridine(38-40) synthase activity"/>
    <property type="evidence" value="ECO:0007669"/>
    <property type="project" value="UniProtKB-EC"/>
</dbReference>
<dbReference type="GO" id="GO:0031119">
    <property type="term" value="P:tRNA pseudouridine synthesis"/>
    <property type="evidence" value="ECO:0007669"/>
    <property type="project" value="UniProtKB-UniRule"/>
</dbReference>
<dbReference type="CDD" id="cd02570">
    <property type="entry name" value="PseudoU_synth_EcTruA"/>
    <property type="match status" value="1"/>
</dbReference>
<dbReference type="FunFam" id="3.30.70.580:FF:000001">
    <property type="entry name" value="tRNA pseudouridine synthase A"/>
    <property type="match status" value="1"/>
</dbReference>
<dbReference type="Gene3D" id="3.30.70.660">
    <property type="entry name" value="Pseudouridine synthase I, catalytic domain, C-terminal subdomain"/>
    <property type="match status" value="1"/>
</dbReference>
<dbReference type="Gene3D" id="3.30.70.580">
    <property type="entry name" value="Pseudouridine synthase I, catalytic domain, N-terminal subdomain"/>
    <property type="match status" value="1"/>
</dbReference>
<dbReference type="HAMAP" id="MF_00171">
    <property type="entry name" value="TruA"/>
    <property type="match status" value="1"/>
</dbReference>
<dbReference type="InterPro" id="IPR020103">
    <property type="entry name" value="PsdUridine_synth_cat_dom_sf"/>
</dbReference>
<dbReference type="InterPro" id="IPR001406">
    <property type="entry name" value="PsdUridine_synth_TruA"/>
</dbReference>
<dbReference type="InterPro" id="IPR020097">
    <property type="entry name" value="PsdUridine_synth_TruA_a/b_dom"/>
</dbReference>
<dbReference type="InterPro" id="IPR020095">
    <property type="entry name" value="PsdUridine_synth_TruA_C"/>
</dbReference>
<dbReference type="InterPro" id="IPR020094">
    <property type="entry name" value="TruA/RsuA/RluB/E/F_N"/>
</dbReference>
<dbReference type="NCBIfam" id="TIGR00071">
    <property type="entry name" value="hisT_truA"/>
    <property type="match status" value="1"/>
</dbReference>
<dbReference type="PANTHER" id="PTHR11142">
    <property type="entry name" value="PSEUDOURIDYLATE SYNTHASE"/>
    <property type="match status" value="1"/>
</dbReference>
<dbReference type="PANTHER" id="PTHR11142:SF0">
    <property type="entry name" value="TRNA PSEUDOURIDINE SYNTHASE-LIKE 1"/>
    <property type="match status" value="1"/>
</dbReference>
<dbReference type="Pfam" id="PF01416">
    <property type="entry name" value="PseudoU_synth_1"/>
    <property type="match status" value="2"/>
</dbReference>
<dbReference type="PIRSF" id="PIRSF001430">
    <property type="entry name" value="tRNA_psdUrid_synth"/>
    <property type="match status" value="1"/>
</dbReference>
<dbReference type="SUPFAM" id="SSF55120">
    <property type="entry name" value="Pseudouridine synthase"/>
    <property type="match status" value="1"/>
</dbReference>
<protein>
    <recommendedName>
        <fullName evidence="1">tRNA pseudouridine synthase A</fullName>
        <ecNumber evidence="1">5.4.99.12</ecNumber>
    </recommendedName>
    <alternativeName>
        <fullName evidence="1">tRNA pseudouridine(38-40) synthase</fullName>
    </alternativeName>
    <alternativeName>
        <fullName evidence="1">tRNA pseudouridylate synthase I</fullName>
    </alternativeName>
    <alternativeName>
        <fullName evidence="1">tRNA-uridine isomerase I</fullName>
    </alternativeName>
</protein>
<gene>
    <name evidence="1" type="primary">truA</name>
    <name type="ordered locus">BMAA1723</name>
</gene>
<accession>Q62AJ2</accession>
<evidence type="ECO:0000255" key="1">
    <source>
        <dbReference type="HAMAP-Rule" id="MF_00171"/>
    </source>
</evidence>
<reference key="1">
    <citation type="journal article" date="2004" name="Proc. Natl. Acad. Sci. U.S.A.">
        <title>Structural flexibility in the Burkholderia mallei genome.</title>
        <authorList>
            <person name="Nierman W.C."/>
            <person name="DeShazer D."/>
            <person name="Kim H.S."/>
            <person name="Tettelin H."/>
            <person name="Nelson K.E."/>
            <person name="Feldblyum T.V."/>
            <person name="Ulrich R.L."/>
            <person name="Ronning C.M."/>
            <person name="Brinkac L.M."/>
            <person name="Daugherty S.C."/>
            <person name="Davidsen T.D."/>
            <person name="DeBoy R.T."/>
            <person name="Dimitrov G."/>
            <person name="Dodson R.J."/>
            <person name="Durkin A.S."/>
            <person name="Gwinn M.L."/>
            <person name="Haft D.H."/>
            <person name="Khouri H.M."/>
            <person name="Kolonay J.F."/>
            <person name="Madupu R."/>
            <person name="Mohammoud Y."/>
            <person name="Nelson W.C."/>
            <person name="Radune D."/>
            <person name="Romero C.M."/>
            <person name="Sarria S."/>
            <person name="Selengut J."/>
            <person name="Shamblin C."/>
            <person name="Sullivan S.A."/>
            <person name="White O."/>
            <person name="Yu Y."/>
            <person name="Zafar N."/>
            <person name="Zhou L."/>
            <person name="Fraser C.M."/>
        </authorList>
    </citation>
    <scope>NUCLEOTIDE SEQUENCE [LARGE SCALE GENOMIC DNA]</scope>
    <source>
        <strain>ATCC 23344</strain>
    </source>
</reference>